<sequence>MSTTTNIQLNNLTAISPIDGRYWGQVQVLSEYFSEYALIKYRVQVEIEYFIELSKLSELKPLNAVNKEDDHKKLRDIYLQFKESDAQKIKQIEKTTNHDIKAVEYFIKEKMHTELQYSEVVTEFIHFGLTSQDINNTAIPLSIVESVEKVLIPQLKQSILEPLRQFAQQWKSIPMLARTHGQPATPTTVGKELMVFIERLENQINHLEQSVPHTCKFGGATGNLNAHKVSYPAIDWVVFSEKFVKVLHPSLKRMRFTTQIEHYDNVASLLDAFKRINTILIDLCRDIWTYISMEYFNQKLVKGEVGSSTMPHKVNPIDFENAEGNMGVANALYEHLSAKLPISRLQRDLTDSTVLRSIGVPFSHSILSFKSIQRGLSKLVLNEANIAKDLDANWAVVSEAIQTILRREGFPKPYEALKELTRVSGSKKITESDIQTFIDSLSIPDDIKSELKLITPFNYIGIIPDF</sequence>
<reference key="1">
    <citation type="journal article" date="2005" name="Nature">
        <title>The genome of the social amoeba Dictyostelium discoideum.</title>
        <authorList>
            <person name="Eichinger L."/>
            <person name="Pachebat J.A."/>
            <person name="Gloeckner G."/>
            <person name="Rajandream M.A."/>
            <person name="Sucgang R."/>
            <person name="Berriman M."/>
            <person name="Song J."/>
            <person name="Olsen R."/>
            <person name="Szafranski K."/>
            <person name="Xu Q."/>
            <person name="Tunggal B."/>
            <person name="Kummerfeld S."/>
            <person name="Madera M."/>
            <person name="Konfortov B.A."/>
            <person name="Rivero F."/>
            <person name="Bankier A.T."/>
            <person name="Lehmann R."/>
            <person name="Hamlin N."/>
            <person name="Davies R."/>
            <person name="Gaudet P."/>
            <person name="Fey P."/>
            <person name="Pilcher K."/>
            <person name="Chen G."/>
            <person name="Saunders D."/>
            <person name="Sodergren E.J."/>
            <person name="Davis P."/>
            <person name="Kerhornou A."/>
            <person name="Nie X."/>
            <person name="Hall N."/>
            <person name="Anjard C."/>
            <person name="Hemphill L."/>
            <person name="Bason N."/>
            <person name="Farbrother P."/>
            <person name="Desany B."/>
            <person name="Just E."/>
            <person name="Morio T."/>
            <person name="Rost R."/>
            <person name="Churcher C.M."/>
            <person name="Cooper J."/>
            <person name="Haydock S."/>
            <person name="van Driessche N."/>
            <person name="Cronin A."/>
            <person name="Goodhead I."/>
            <person name="Muzny D.M."/>
            <person name="Mourier T."/>
            <person name="Pain A."/>
            <person name="Lu M."/>
            <person name="Harper D."/>
            <person name="Lindsay R."/>
            <person name="Hauser H."/>
            <person name="James K.D."/>
            <person name="Quiles M."/>
            <person name="Madan Babu M."/>
            <person name="Saito T."/>
            <person name="Buchrieser C."/>
            <person name="Wardroper A."/>
            <person name="Felder M."/>
            <person name="Thangavelu M."/>
            <person name="Johnson D."/>
            <person name="Knights A."/>
            <person name="Loulseged H."/>
            <person name="Mungall K.L."/>
            <person name="Oliver K."/>
            <person name="Price C."/>
            <person name="Quail M.A."/>
            <person name="Urushihara H."/>
            <person name="Hernandez J."/>
            <person name="Rabbinowitsch E."/>
            <person name="Steffen D."/>
            <person name="Sanders M."/>
            <person name="Ma J."/>
            <person name="Kohara Y."/>
            <person name="Sharp S."/>
            <person name="Simmonds M.N."/>
            <person name="Spiegler S."/>
            <person name="Tivey A."/>
            <person name="Sugano S."/>
            <person name="White B."/>
            <person name="Walker D."/>
            <person name="Woodward J.R."/>
            <person name="Winckler T."/>
            <person name="Tanaka Y."/>
            <person name="Shaulsky G."/>
            <person name="Schleicher M."/>
            <person name="Weinstock G.M."/>
            <person name="Rosenthal A."/>
            <person name="Cox E.C."/>
            <person name="Chisholm R.L."/>
            <person name="Gibbs R.A."/>
            <person name="Loomis W.F."/>
            <person name="Platzer M."/>
            <person name="Kay R.R."/>
            <person name="Williams J.G."/>
            <person name="Dear P.H."/>
            <person name="Noegel A.A."/>
            <person name="Barrell B.G."/>
            <person name="Kuspa A."/>
        </authorList>
    </citation>
    <scope>NUCLEOTIDE SEQUENCE [LARGE SCALE GENOMIC DNA]</scope>
    <source>
        <strain>AX4</strain>
    </source>
</reference>
<keyword id="KW-0456">Lyase</keyword>
<keyword id="KW-0658">Purine biosynthesis</keyword>
<keyword id="KW-1185">Reference proteome</keyword>
<gene>
    <name type="primary">purB</name>
    <name type="ORF">DDB_G0288333</name>
</gene>
<name>PUR8_DICDI</name>
<evidence type="ECO:0000250" key="1"/>
<evidence type="ECO:0000305" key="2"/>
<protein>
    <recommendedName>
        <fullName>Adenylosuccinate lyase</fullName>
        <shortName>ASL</shortName>
        <ecNumber>4.3.2.2</ecNumber>
    </recommendedName>
    <alternativeName>
        <fullName>Adenylosuccinase</fullName>
        <shortName>ASase</shortName>
    </alternativeName>
</protein>
<proteinExistence type="inferred from homology"/>
<comment type="catalytic activity">
    <reaction>
        <text>N(6)-(1,2-dicarboxyethyl)-AMP = fumarate + AMP</text>
        <dbReference type="Rhea" id="RHEA:16853"/>
        <dbReference type="ChEBI" id="CHEBI:29806"/>
        <dbReference type="ChEBI" id="CHEBI:57567"/>
        <dbReference type="ChEBI" id="CHEBI:456215"/>
        <dbReference type="EC" id="4.3.2.2"/>
    </reaction>
</comment>
<comment type="catalytic activity">
    <reaction>
        <text>(2S)-2-[5-amino-1-(5-phospho-beta-D-ribosyl)imidazole-4-carboxamido]succinate = 5-amino-1-(5-phospho-beta-D-ribosyl)imidazole-4-carboxamide + fumarate</text>
        <dbReference type="Rhea" id="RHEA:23920"/>
        <dbReference type="ChEBI" id="CHEBI:29806"/>
        <dbReference type="ChEBI" id="CHEBI:58443"/>
        <dbReference type="ChEBI" id="CHEBI:58475"/>
        <dbReference type="EC" id="4.3.2.2"/>
    </reaction>
</comment>
<comment type="pathway">
    <text>Purine metabolism; AMP biosynthesis via de novo pathway; AMP from IMP: step 2/2.</text>
</comment>
<comment type="pathway">
    <text>Purine metabolism; IMP biosynthesis via de novo pathway; 5-amino-1-(5-phospho-D-ribosyl)imidazole-4-carboxamide from 5-amino-1-(5-phospho-D-ribosyl)imidazole-4-carboxylate: step 2/2.</text>
</comment>
<comment type="subunit">
    <text evidence="1">Homotetramer. Residues from neighboring subunits contribute catalytic and substrate-binding residues to each active site (By similarity).</text>
</comment>
<comment type="similarity">
    <text evidence="2">Belongs to the lyase 1 family. Adenylosuccinate lyase subfamily.</text>
</comment>
<accession>Q54J34</accession>
<organism>
    <name type="scientific">Dictyostelium discoideum</name>
    <name type="common">Social amoeba</name>
    <dbReference type="NCBI Taxonomy" id="44689"/>
    <lineage>
        <taxon>Eukaryota</taxon>
        <taxon>Amoebozoa</taxon>
        <taxon>Evosea</taxon>
        <taxon>Eumycetozoa</taxon>
        <taxon>Dictyostelia</taxon>
        <taxon>Dictyosteliales</taxon>
        <taxon>Dictyosteliaceae</taxon>
        <taxon>Dictyostelium</taxon>
    </lineage>
</organism>
<dbReference type="EC" id="4.3.2.2"/>
<dbReference type="EMBL" id="AAFI02000111">
    <property type="protein sequence ID" value="EAL63263.1"/>
    <property type="molecule type" value="Genomic_DNA"/>
</dbReference>
<dbReference type="RefSeq" id="XP_636767.1">
    <property type="nucleotide sequence ID" value="XM_631675.1"/>
</dbReference>
<dbReference type="SMR" id="Q54J34"/>
<dbReference type="FunCoup" id="Q54J34">
    <property type="interactions" value="559"/>
</dbReference>
<dbReference type="STRING" id="44689.Q54J34"/>
<dbReference type="PaxDb" id="44689-DDB0230094"/>
<dbReference type="EnsemblProtists" id="EAL63263">
    <property type="protein sequence ID" value="EAL63263"/>
    <property type="gene ID" value="DDB_G0288333"/>
</dbReference>
<dbReference type="GeneID" id="8626570"/>
<dbReference type="KEGG" id="ddi:DDB_G0288333"/>
<dbReference type="dictyBase" id="DDB_G0288333">
    <property type="gene designation" value="purB"/>
</dbReference>
<dbReference type="VEuPathDB" id="AmoebaDB:DDB_G0288333"/>
<dbReference type="eggNOG" id="KOG2700">
    <property type="taxonomic scope" value="Eukaryota"/>
</dbReference>
<dbReference type="HOGENOM" id="CLU_025566_2_0_1"/>
<dbReference type="InParanoid" id="Q54J34"/>
<dbReference type="OMA" id="NNWAVVA"/>
<dbReference type="PhylomeDB" id="Q54J34"/>
<dbReference type="UniPathway" id="UPA00074">
    <property type="reaction ID" value="UER00132"/>
</dbReference>
<dbReference type="UniPathway" id="UPA00075">
    <property type="reaction ID" value="UER00336"/>
</dbReference>
<dbReference type="PRO" id="PR:Q54J34"/>
<dbReference type="Proteomes" id="UP000002195">
    <property type="component" value="Chromosome 5"/>
</dbReference>
<dbReference type="GO" id="GO:0070626">
    <property type="term" value="F:(S)-2-(5-amino-1-(5-phospho-D-ribosyl)imidazole-4-carboxamido) succinate lyase (fumarate-forming) activity"/>
    <property type="evidence" value="ECO:0007669"/>
    <property type="project" value="RHEA"/>
</dbReference>
<dbReference type="GO" id="GO:0004018">
    <property type="term" value="F:N6-(1,2-dicarboxyethyl)AMP AMP-lyase (fumarate-forming) activity"/>
    <property type="evidence" value="ECO:0000250"/>
    <property type="project" value="dictyBase"/>
</dbReference>
<dbReference type="GO" id="GO:0044208">
    <property type="term" value="P:'de novo' AMP biosynthetic process"/>
    <property type="evidence" value="ECO:0007669"/>
    <property type="project" value="UniProtKB-UniPathway"/>
</dbReference>
<dbReference type="GO" id="GO:0006189">
    <property type="term" value="P:'de novo' IMP biosynthetic process"/>
    <property type="evidence" value="ECO:0007669"/>
    <property type="project" value="UniProtKB-UniPathway"/>
</dbReference>
<dbReference type="GO" id="GO:0006164">
    <property type="term" value="P:purine nucleotide biosynthetic process"/>
    <property type="evidence" value="ECO:0000250"/>
    <property type="project" value="dictyBase"/>
</dbReference>
<dbReference type="CDD" id="cd01598">
    <property type="entry name" value="PurB"/>
    <property type="match status" value="1"/>
</dbReference>
<dbReference type="Gene3D" id="1.10.40.30">
    <property type="entry name" value="Fumarase/aspartase (C-terminal domain)"/>
    <property type="match status" value="1"/>
</dbReference>
<dbReference type="Gene3D" id="1.20.200.10">
    <property type="entry name" value="Fumarase/aspartase (Central domain)"/>
    <property type="match status" value="1"/>
</dbReference>
<dbReference type="Gene3D" id="1.10.275.10">
    <property type="entry name" value="Fumarase/aspartase (N-terminal domain)"/>
    <property type="match status" value="1"/>
</dbReference>
<dbReference type="InterPro" id="IPR024083">
    <property type="entry name" value="Fumarase/histidase_N"/>
</dbReference>
<dbReference type="InterPro" id="IPR020557">
    <property type="entry name" value="Fumarate_lyase_CS"/>
</dbReference>
<dbReference type="InterPro" id="IPR000362">
    <property type="entry name" value="Fumarate_lyase_fam"/>
</dbReference>
<dbReference type="InterPro" id="IPR022761">
    <property type="entry name" value="Fumarate_lyase_N"/>
</dbReference>
<dbReference type="InterPro" id="IPR008948">
    <property type="entry name" value="L-Aspartase-like"/>
</dbReference>
<dbReference type="InterPro" id="IPR004769">
    <property type="entry name" value="Pur_lyase"/>
</dbReference>
<dbReference type="InterPro" id="IPR047136">
    <property type="entry name" value="PurB_bact"/>
</dbReference>
<dbReference type="InterPro" id="IPR013539">
    <property type="entry name" value="PurB_C"/>
</dbReference>
<dbReference type="NCBIfam" id="NF006764">
    <property type="entry name" value="PRK09285.1"/>
    <property type="match status" value="1"/>
</dbReference>
<dbReference type="NCBIfam" id="TIGR00928">
    <property type="entry name" value="purB"/>
    <property type="match status" value="1"/>
</dbReference>
<dbReference type="PANTHER" id="PTHR43411">
    <property type="entry name" value="ADENYLOSUCCINATE LYASE"/>
    <property type="match status" value="1"/>
</dbReference>
<dbReference type="PANTHER" id="PTHR43411:SF1">
    <property type="entry name" value="ADENYLOSUCCINATE LYASE"/>
    <property type="match status" value="1"/>
</dbReference>
<dbReference type="Pfam" id="PF08328">
    <property type="entry name" value="ASL_C"/>
    <property type="match status" value="1"/>
</dbReference>
<dbReference type="Pfam" id="PF00206">
    <property type="entry name" value="Lyase_1"/>
    <property type="match status" value="1"/>
</dbReference>
<dbReference type="PRINTS" id="PR00149">
    <property type="entry name" value="FUMRATELYASE"/>
</dbReference>
<dbReference type="SUPFAM" id="SSF48557">
    <property type="entry name" value="L-aspartase-like"/>
    <property type="match status" value="1"/>
</dbReference>
<dbReference type="PROSITE" id="PS00163">
    <property type="entry name" value="FUMARATE_LYASES"/>
    <property type="match status" value="1"/>
</dbReference>
<feature type="chain" id="PRO_0000328543" description="Adenylosuccinate lyase">
    <location>
        <begin position="1"/>
        <end position="466"/>
    </location>
</feature>
<feature type="active site" description="Proton donor/acceptor" evidence="1">
    <location>
        <position position="180"/>
    </location>
</feature>
<feature type="active site" description="Proton donor/acceptor" evidence="1">
    <location>
        <position position="307"/>
    </location>
</feature>
<feature type="binding site" evidence="1">
    <location>
        <begin position="21"/>
        <end position="22"/>
    </location>
    <ligand>
        <name>substrate</name>
        <note>ligand shared between two neighboring subunits</note>
    </ligand>
</feature>
<feature type="binding site" description="in other chain" evidence="1">
    <location>
        <begin position="97"/>
        <end position="99"/>
    </location>
    <ligand>
        <name>substrate</name>
        <note>ligand shared between two neighboring subunits</note>
    </ligand>
</feature>
<feature type="binding site" description="in other chain" evidence="1">
    <location>
        <begin position="130"/>
        <end position="131"/>
    </location>
    <ligand>
        <name>substrate</name>
        <note>ligand shared between two neighboring subunits</note>
    </ligand>
</feature>
<feature type="binding site" description="in other chain" evidence="1">
    <location>
        <position position="259"/>
    </location>
    <ligand>
        <name>substrate</name>
        <note>ligand shared between two neighboring subunits</note>
    </ligand>
</feature>
<feature type="binding site" description="in other chain" evidence="1">
    <location>
        <position position="347"/>
    </location>
    <ligand>
        <name>substrate</name>
        <note>ligand shared between two neighboring subunits</note>
    </ligand>
</feature>
<feature type="binding site" description="in other chain" evidence="1">
    <location>
        <position position="352"/>
    </location>
    <ligand>
        <name>substrate</name>
        <note>ligand shared between two neighboring subunits</note>
    </ligand>
</feature>
<feature type="binding site" description="in other chain" evidence="1">
    <location>
        <position position="356"/>
    </location>
    <ligand>
        <name>substrate</name>
        <note>ligand shared between two neighboring subunits</note>
    </ligand>
</feature>